<sequence length="100" mass="11245">MHITPREQEKLMIVVAADLARRRKDRGLKLNHPEAVALITYELIEGARDGRTVADLMSWGSTILTRDDVLEGIPEMIPDIQVEATFDDGTKLVTVHNPIR</sequence>
<protein>
    <recommendedName>
        <fullName evidence="1">Urease subunit gamma</fullName>
        <ecNumber evidence="1">3.5.1.5</ecNumber>
    </recommendedName>
    <alternativeName>
        <fullName evidence="1">Urea amidohydrolase subunit gamma</fullName>
    </alternativeName>
</protein>
<proteinExistence type="evidence at protein level"/>
<accession>Q9RHM6</accession>
<gene>
    <name evidence="1" type="primary">ureA</name>
    <name type="ordered locus">Cgl0084</name>
    <name type="ordered locus">cg0113</name>
</gene>
<name>URE3_CORGL</name>
<reference key="1">
    <citation type="journal article" date="2000" name="DNA Seq.">
        <title>Structure of the urease operon of Corynebacterium glutamicum.</title>
        <authorList>
            <person name="Puskas L.G."/>
            <person name="Inui M."/>
            <person name="Yukawa H."/>
        </authorList>
    </citation>
    <scope>NUCLEOTIDE SEQUENCE [GENOMIC DNA]</scope>
    <scope>INDUCTION</scope>
    <source>
        <strain>ATCC 13869 / DSMZ 1412 / NCIMB 9567</strain>
    </source>
</reference>
<reference key="2">
    <citation type="journal article" date="2000" name="FEMS Microbiol. Lett.">
        <title>Urease of Corynebacterium glutamicum: organization of corresponding genes and investigation of activity.</title>
        <authorList>
            <person name="Nolden L."/>
            <person name="Beckers G."/>
            <person name="Moeckel B."/>
            <person name="Pfefferle W."/>
            <person name="Nampoothiri K.M."/>
            <person name="Kraemer R."/>
            <person name="Burkovski A."/>
        </authorList>
    </citation>
    <scope>NUCLEOTIDE SEQUENCE [GENOMIC DNA]</scope>
    <scope>OPERON STRUCTURE</scope>
    <source>
        <strain>ATCC 13032 / DSM 20300 / JCM 1318 / BCRC 11384 / CCUG 27702 / LMG 3730 / NBRC 12168 / NCIMB 10025 / NRRL B-2784 / 534</strain>
    </source>
</reference>
<reference key="3">
    <citation type="journal article" date="2003" name="Appl. Microbiol. Biotechnol.">
        <title>The Corynebacterium glutamicum genome: features and impacts on biotechnological processes.</title>
        <authorList>
            <person name="Ikeda M."/>
            <person name="Nakagawa S."/>
        </authorList>
    </citation>
    <scope>NUCLEOTIDE SEQUENCE [LARGE SCALE GENOMIC DNA]</scope>
    <source>
        <strain>ATCC 13032 / DSM 20300 / JCM 1318 / BCRC 11384 / CCUG 27702 / LMG 3730 / NBRC 12168 / NCIMB 10025 / NRRL B-2784 / 534</strain>
    </source>
</reference>
<reference key="4">
    <citation type="journal article" date="2003" name="J. Biotechnol.">
        <title>The complete Corynebacterium glutamicum ATCC 13032 genome sequence and its impact on the production of L-aspartate-derived amino acids and vitamins.</title>
        <authorList>
            <person name="Kalinowski J."/>
            <person name="Bathe B."/>
            <person name="Bartels D."/>
            <person name="Bischoff N."/>
            <person name="Bott M."/>
            <person name="Burkovski A."/>
            <person name="Dusch N."/>
            <person name="Eggeling L."/>
            <person name="Eikmanns B.J."/>
            <person name="Gaigalat L."/>
            <person name="Goesmann A."/>
            <person name="Hartmann M."/>
            <person name="Huthmacher K."/>
            <person name="Kraemer R."/>
            <person name="Linke B."/>
            <person name="McHardy A.C."/>
            <person name="Meyer F."/>
            <person name="Moeckel B."/>
            <person name="Pfefferle W."/>
            <person name="Puehler A."/>
            <person name="Rey D.A."/>
            <person name="Rueckert C."/>
            <person name="Rupp O."/>
            <person name="Sahm H."/>
            <person name="Wendisch V.F."/>
            <person name="Wiegraebe I."/>
            <person name="Tauch A."/>
        </authorList>
    </citation>
    <scope>NUCLEOTIDE SEQUENCE [LARGE SCALE GENOMIC DNA]</scope>
    <source>
        <strain>ATCC 13032 / DSM 20300 / JCM 1318 / BCRC 11384 / CCUG 27702 / LMG 3730 / NBRC 12168 / NCIMB 10025 / NRRL B-2784 / 534</strain>
    </source>
</reference>
<reference key="5">
    <citation type="journal article" date="2004" name="J. Bacteriol.">
        <title>Molecular identification of the urea uptake system and transcriptional analysis of urea transporter- and urease-encoding genes in Corynebacterium glutamicum.</title>
        <authorList>
            <person name="Beckers G."/>
            <person name="Bendt A.K."/>
            <person name="Kraemer R."/>
            <person name="Burkovski A."/>
        </authorList>
    </citation>
    <scope>INDUCTION</scope>
    <scope>IDENTIFICATION BY MASS SPECTROMETRY</scope>
</reference>
<comment type="catalytic activity">
    <reaction evidence="1">
        <text>urea + 2 H2O + H(+) = hydrogencarbonate + 2 NH4(+)</text>
        <dbReference type="Rhea" id="RHEA:20557"/>
        <dbReference type="ChEBI" id="CHEBI:15377"/>
        <dbReference type="ChEBI" id="CHEBI:15378"/>
        <dbReference type="ChEBI" id="CHEBI:16199"/>
        <dbReference type="ChEBI" id="CHEBI:17544"/>
        <dbReference type="ChEBI" id="CHEBI:28938"/>
        <dbReference type="EC" id="3.5.1.5"/>
    </reaction>
</comment>
<comment type="pathway">
    <text evidence="1">Nitrogen metabolism; urea degradation; CO(2) and NH(3) from urea (urease route): step 1/1.</text>
</comment>
<comment type="subunit">
    <text evidence="1">Heterotrimer of UreA (gamma), UreB (beta) and UreC (alpha) subunits. Three heterotrimers associate to form the active enzyme.</text>
</comment>
<comment type="subcellular location">
    <subcellularLocation>
        <location evidence="1">Cytoplasm</location>
    </subcellularLocation>
</comment>
<comment type="induction">
    <text evidence="2 3">By urea and nitrogen starvation.</text>
</comment>
<comment type="similarity">
    <text evidence="1">Belongs to the urease gamma subunit family.</text>
</comment>
<feature type="chain" id="PRO_0000098010" description="Urease subunit gamma">
    <location>
        <begin position="1"/>
        <end position="100"/>
    </location>
</feature>
<organism>
    <name type="scientific">Corynebacterium glutamicum (strain ATCC 13032 / DSM 20300 / JCM 1318 / BCRC 11384 / CCUG 27702 / LMG 3730 / NBRC 12168 / NCIMB 10025 / NRRL B-2784 / 534)</name>
    <dbReference type="NCBI Taxonomy" id="196627"/>
    <lineage>
        <taxon>Bacteria</taxon>
        <taxon>Bacillati</taxon>
        <taxon>Actinomycetota</taxon>
        <taxon>Actinomycetes</taxon>
        <taxon>Mycobacteriales</taxon>
        <taxon>Corynebacteriaceae</taxon>
        <taxon>Corynebacterium</taxon>
    </lineage>
</organism>
<keyword id="KW-0963">Cytoplasm</keyword>
<keyword id="KW-0378">Hydrolase</keyword>
<keyword id="KW-1185">Reference proteome</keyword>
<dbReference type="EC" id="3.5.1.5" evidence="1"/>
<dbReference type="EMBL" id="AJ251883">
    <property type="protein sequence ID" value="CAB81935.1"/>
    <property type="molecule type" value="Genomic_DNA"/>
</dbReference>
<dbReference type="EMBL" id="AB029154">
    <property type="protein sequence ID" value="BAA88552.1"/>
    <property type="molecule type" value="Genomic_DNA"/>
</dbReference>
<dbReference type="EMBL" id="BA000036">
    <property type="protein sequence ID" value="BAB97477.1"/>
    <property type="molecule type" value="Genomic_DNA"/>
</dbReference>
<dbReference type="EMBL" id="BX927148">
    <property type="protein sequence ID" value="CAF18652.1"/>
    <property type="molecule type" value="Genomic_DNA"/>
</dbReference>
<dbReference type="RefSeq" id="NP_599336.1">
    <property type="nucleotide sequence ID" value="NC_003450.3"/>
</dbReference>
<dbReference type="RefSeq" id="WP_003857708.1">
    <property type="nucleotide sequence ID" value="NC_006958.1"/>
</dbReference>
<dbReference type="SMR" id="Q9RHM6"/>
<dbReference type="STRING" id="196627.cg0113"/>
<dbReference type="KEGG" id="cgb:cg0113"/>
<dbReference type="KEGG" id="cgl:Cgl0084"/>
<dbReference type="PATRIC" id="fig|196627.13.peg.85"/>
<dbReference type="eggNOG" id="COG0831">
    <property type="taxonomic scope" value="Bacteria"/>
</dbReference>
<dbReference type="HOGENOM" id="CLU_145825_1_0_11"/>
<dbReference type="OrthoDB" id="9797217at2"/>
<dbReference type="BioCyc" id="CORYNE:G18NG-9633-MONOMER"/>
<dbReference type="UniPathway" id="UPA00258">
    <property type="reaction ID" value="UER00370"/>
</dbReference>
<dbReference type="Proteomes" id="UP000000582">
    <property type="component" value="Chromosome"/>
</dbReference>
<dbReference type="Proteomes" id="UP000001009">
    <property type="component" value="Chromosome"/>
</dbReference>
<dbReference type="GO" id="GO:0005737">
    <property type="term" value="C:cytoplasm"/>
    <property type="evidence" value="ECO:0007669"/>
    <property type="project" value="UniProtKB-SubCell"/>
</dbReference>
<dbReference type="GO" id="GO:0016151">
    <property type="term" value="F:nickel cation binding"/>
    <property type="evidence" value="ECO:0007669"/>
    <property type="project" value="InterPro"/>
</dbReference>
<dbReference type="GO" id="GO:0009039">
    <property type="term" value="F:urease activity"/>
    <property type="evidence" value="ECO:0007669"/>
    <property type="project" value="UniProtKB-UniRule"/>
</dbReference>
<dbReference type="GO" id="GO:0043419">
    <property type="term" value="P:urea catabolic process"/>
    <property type="evidence" value="ECO:0007669"/>
    <property type="project" value="UniProtKB-UniRule"/>
</dbReference>
<dbReference type="CDD" id="cd00390">
    <property type="entry name" value="Urease_gamma"/>
    <property type="match status" value="1"/>
</dbReference>
<dbReference type="Gene3D" id="3.30.280.10">
    <property type="entry name" value="Urease, gamma-like subunit"/>
    <property type="match status" value="1"/>
</dbReference>
<dbReference type="HAMAP" id="MF_00739">
    <property type="entry name" value="Urease_gamma"/>
    <property type="match status" value="1"/>
</dbReference>
<dbReference type="InterPro" id="IPR012010">
    <property type="entry name" value="Urease_gamma"/>
</dbReference>
<dbReference type="InterPro" id="IPR002026">
    <property type="entry name" value="Urease_gamma/gamma-beta_su"/>
</dbReference>
<dbReference type="InterPro" id="IPR036463">
    <property type="entry name" value="Urease_gamma_sf"/>
</dbReference>
<dbReference type="InterPro" id="IPR050069">
    <property type="entry name" value="Urease_subunit"/>
</dbReference>
<dbReference type="NCBIfam" id="NF009712">
    <property type="entry name" value="PRK13241.1"/>
    <property type="match status" value="1"/>
</dbReference>
<dbReference type="NCBIfam" id="TIGR00193">
    <property type="entry name" value="urease_gam"/>
    <property type="match status" value="1"/>
</dbReference>
<dbReference type="PANTHER" id="PTHR33569">
    <property type="entry name" value="UREASE"/>
    <property type="match status" value="1"/>
</dbReference>
<dbReference type="PANTHER" id="PTHR33569:SF1">
    <property type="entry name" value="UREASE"/>
    <property type="match status" value="1"/>
</dbReference>
<dbReference type="Pfam" id="PF00547">
    <property type="entry name" value="Urease_gamma"/>
    <property type="match status" value="1"/>
</dbReference>
<dbReference type="PIRSF" id="PIRSF001223">
    <property type="entry name" value="Urease_gamma"/>
    <property type="match status" value="1"/>
</dbReference>
<dbReference type="SUPFAM" id="SSF54111">
    <property type="entry name" value="Urease, gamma-subunit"/>
    <property type="match status" value="1"/>
</dbReference>
<evidence type="ECO:0000255" key="1">
    <source>
        <dbReference type="HAMAP-Rule" id="MF_00739"/>
    </source>
</evidence>
<evidence type="ECO:0000269" key="2">
    <source>
    </source>
</evidence>
<evidence type="ECO:0000269" key="3">
    <source>
    </source>
</evidence>